<feature type="chain" id="PRO_1000057298" description="Ribosome-recycling factor">
    <location>
        <begin position="1"/>
        <end position="185"/>
    </location>
</feature>
<sequence length="185" mass="20710">MINEIRKDAEVRMEKCLEAFQNHISKIRTGRASPSILDGIQVEYYGTATPLRQLANIVVEDSRTLALTVFDRSLSAAVEKAIMTSDLGLNPSSAGTVIRVPLPALTEERRKDLIKVVRAEAEQGRVSIRNVRRDANDKVKALLKDKEISEDEDRRSQDDVQKLTDAYIKKVDAALAVKEAELMDF</sequence>
<name>RRF_YERP3</name>
<keyword id="KW-0963">Cytoplasm</keyword>
<keyword id="KW-0648">Protein biosynthesis</keyword>
<dbReference type="EMBL" id="CP000720">
    <property type="protein sequence ID" value="ABS48183.1"/>
    <property type="molecule type" value="Genomic_DNA"/>
</dbReference>
<dbReference type="RefSeq" id="WP_002212134.1">
    <property type="nucleotide sequence ID" value="NC_009708.1"/>
</dbReference>
<dbReference type="SMR" id="A7FFH2"/>
<dbReference type="GeneID" id="57977514"/>
<dbReference type="KEGG" id="ypi:YpsIP31758_1016"/>
<dbReference type="HOGENOM" id="CLU_073981_2_1_6"/>
<dbReference type="Proteomes" id="UP000002412">
    <property type="component" value="Chromosome"/>
</dbReference>
<dbReference type="GO" id="GO:0005829">
    <property type="term" value="C:cytosol"/>
    <property type="evidence" value="ECO:0007669"/>
    <property type="project" value="GOC"/>
</dbReference>
<dbReference type="GO" id="GO:0043023">
    <property type="term" value="F:ribosomal large subunit binding"/>
    <property type="evidence" value="ECO:0007669"/>
    <property type="project" value="TreeGrafter"/>
</dbReference>
<dbReference type="GO" id="GO:0002184">
    <property type="term" value="P:cytoplasmic translational termination"/>
    <property type="evidence" value="ECO:0007669"/>
    <property type="project" value="TreeGrafter"/>
</dbReference>
<dbReference type="CDD" id="cd00520">
    <property type="entry name" value="RRF"/>
    <property type="match status" value="1"/>
</dbReference>
<dbReference type="FunFam" id="1.10.132.20:FF:000001">
    <property type="entry name" value="Ribosome-recycling factor"/>
    <property type="match status" value="1"/>
</dbReference>
<dbReference type="FunFam" id="3.30.1360.40:FF:000001">
    <property type="entry name" value="Ribosome-recycling factor"/>
    <property type="match status" value="1"/>
</dbReference>
<dbReference type="Gene3D" id="3.30.1360.40">
    <property type="match status" value="1"/>
</dbReference>
<dbReference type="Gene3D" id="1.10.132.20">
    <property type="entry name" value="Ribosome-recycling factor"/>
    <property type="match status" value="1"/>
</dbReference>
<dbReference type="HAMAP" id="MF_00040">
    <property type="entry name" value="RRF"/>
    <property type="match status" value="1"/>
</dbReference>
<dbReference type="InterPro" id="IPR002661">
    <property type="entry name" value="Ribosome_recyc_fac"/>
</dbReference>
<dbReference type="InterPro" id="IPR023584">
    <property type="entry name" value="Ribosome_recyc_fac_dom"/>
</dbReference>
<dbReference type="InterPro" id="IPR036191">
    <property type="entry name" value="RRF_sf"/>
</dbReference>
<dbReference type="NCBIfam" id="TIGR00496">
    <property type="entry name" value="frr"/>
    <property type="match status" value="1"/>
</dbReference>
<dbReference type="PANTHER" id="PTHR20982:SF3">
    <property type="entry name" value="MITOCHONDRIAL RIBOSOME RECYCLING FACTOR PSEUDO 1"/>
    <property type="match status" value="1"/>
</dbReference>
<dbReference type="PANTHER" id="PTHR20982">
    <property type="entry name" value="RIBOSOME RECYCLING FACTOR"/>
    <property type="match status" value="1"/>
</dbReference>
<dbReference type="Pfam" id="PF01765">
    <property type="entry name" value="RRF"/>
    <property type="match status" value="1"/>
</dbReference>
<dbReference type="SUPFAM" id="SSF55194">
    <property type="entry name" value="Ribosome recycling factor, RRF"/>
    <property type="match status" value="1"/>
</dbReference>
<protein>
    <recommendedName>
        <fullName evidence="1">Ribosome-recycling factor</fullName>
        <shortName evidence="1">RRF</shortName>
    </recommendedName>
    <alternativeName>
        <fullName evidence="1">Ribosome-releasing factor</fullName>
    </alternativeName>
</protein>
<gene>
    <name evidence="1" type="primary">frr</name>
    <name type="ordered locus">YpsIP31758_1016</name>
</gene>
<proteinExistence type="inferred from homology"/>
<accession>A7FFH2</accession>
<evidence type="ECO:0000255" key="1">
    <source>
        <dbReference type="HAMAP-Rule" id="MF_00040"/>
    </source>
</evidence>
<comment type="function">
    <text evidence="1">Responsible for the release of ribosomes from messenger RNA at the termination of protein biosynthesis. May increase the efficiency of translation by recycling ribosomes from one round of translation to another.</text>
</comment>
<comment type="subcellular location">
    <subcellularLocation>
        <location evidence="1">Cytoplasm</location>
    </subcellularLocation>
</comment>
<comment type="similarity">
    <text evidence="1">Belongs to the RRF family.</text>
</comment>
<reference key="1">
    <citation type="journal article" date="2007" name="PLoS Genet.">
        <title>The complete genome sequence of Yersinia pseudotuberculosis IP31758, the causative agent of Far East scarlet-like fever.</title>
        <authorList>
            <person name="Eppinger M."/>
            <person name="Rosovitz M.J."/>
            <person name="Fricke W.F."/>
            <person name="Rasko D.A."/>
            <person name="Kokorina G."/>
            <person name="Fayolle C."/>
            <person name="Lindler L.E."/>
            <person name="Carniel E."/>
            <person name="Ravel J."/>
        </authorList>
    </citation>
    <scope>NUCLEOTIDE SEQUENCE [LARGE SCALE GENOMIC DNA]</scope>
    <source>
        <strain>IP 31758</strain>
    </source>
</reference>
<organism>
    <name type="scientific">Yersinia pseudotuberculosis serotype O:1b (strain IP 31758)</name>
    <dbReference type="NCBI Taxonomy" id="349747"/>
    <lineage>
        <taxon>Bacteria</taxon>
        <taxon>Pseudomonadati</taxon>
        <taxon>Pseudomonadota</taxon>
        <taxon>Gammaproteobacteria</taxon>
        <taxon>Enterobacterales</taxon>
        <taxon>Yersiniaceae</taxon>
        <taxon>Yersinia</taxon>
    </lineage>
</organism>